<accession>A4VHQ4</accession>
<comment type="function">
    <text evidence="1">One of the primary rRNA binding proteins, it binds directly to 16S rRNA where it nucleates assembly of the body of the 30S subunit.</text>
</comment>
<comment type="function">
    <text evidence="1">With S5 and S12 plays an important role in translational accuracy.</text>
</comment>
<comment type="subunit">
    <text evidence="1">Part of the 30S ribosomal subunit. Contacts protein S5. The interaction surface between S4 and S5 is involved in control of translational fidelity.</text>
</comment>
<comment type="similarity">
    <text evidence="1">Belongs to the universal ribosomal protein uS4 family.</text>
</comment>
<reference key="1">
    <citation type="journal article" date="2008" name="Proc. Natl. Acad. Sci. U.S.A.">
        <title>Nitrogen fixation island and rhizosphere competence traits in the genome of root-associated Pseudomonas stutzeri A1501.</title>
        <authorList>
            <person name="Yan Y."/>
            <person name="Yang J."/>
            <person name="Dou Y."/>
            <person name="Chen M."/>
            <person name="Ping S."/>
            <person name="Peng J."/>
            <person name="Lu W."/>
            <person name="Zhang W."/>
            <person name="Yao Z."/>
            <person name="Li H."/>
            <person name="Liu W."/>
            <person name="He S."/>
            <person name="Geng L."/>
            <person name="Zhang X."/>
            <person name="Yang F."/>
            <person name="Yu H."/>
            <person name="Zhan Y."/>
            <person name="Li D."/>
            <person name="Lin Z."/>
            <person name="Wang Y."/>
            <person name="Elmerich C."/>
            <person name="Lin M."/>
            <person name="Jin Q."/>
        </authorList>
    </citation>
    <scope>NUCLEOTIDE SEQUENCE [LARGE SCALE GENOMIC DNA]</scope>
    <source>
        <strain>A1501</strain>
    </source>
</reference>
<gene>
    <name evidence="1" type="primary">rpsD</name>
    <name type="ordered locus">PST_0808</name>
</gene>
<protein>
    <recommendedName>
        <fullName evidence="1">Small ribosomal subunit protein uS4</fullName>
    </recommendedName>
    <alternativeName>
        <fullName evidence="2">30S ribosomal protein S4</fullName>
    </alternativeName>
</protein>
<keyword id="KW-1185">Reference proteome</keyword>
<keyword id="KW-0687">Ribonucleoprotein</keyword>
<keyword id="KW-0689">Ribosomal protein</keyword>
<keyword id="KW-0694">RNA-binding</keyword>
<keyword id="KW-0699">rRNA-binding</keyword>
<organism>
    <name type="scientific">Stutzerimonas stutzeri (strain A1501)</name>
    <name type="common">Pseudomonas stutzeri</name>
    <dbReference type="NCBI Taxonomy" id="379731"/>
    <lineage>
        <taxon>Bacteria</taxon>
        <taxon>Pseudomonadati</taxon>
        <taxon>Pseudomonadota</taxon>
        <taxon>Gammaproteobacteria</taxon>
        <taxon>Pseudomonadales</taxon>
        <taxon>Pseudomonadaceae</taxon>
        <taxon>Stutzerimonas</taxon>
    </lineage>
</organism>
<sequence>MARYIGPKCKLSRREGTDLFLKSGARALESKCNIETPPGVHGQRRGRLSDYGTQLREKQKVRRIYGVLERQFSGYYKEAASRKGATGENLLQLLECRLDNVVYRMGFGSTRAESRQLVSHKSITVNGQTVNIPSYQVKAGDVVAVREKCRNQLRIAQALELCAQRGRVEWVEVDADKKSGVFKNVPARSDLSADINENLIVELYSK</sequence>
<name>RS4_STUS1</name>
<feature type="chain" id="PRO_0000322322" description="Small ribosomal subunit protein uS4">
    <location>
        <begin position="1"/>
        <end position="206"/>
    </location>
</feature>
<feature type="domain" description="S4 RNA-binding" evidence="1">
    <location>
        <begin position="96"/>
        <end position="157"/>
    </location>
</feature>
<dbReference type="EMBL" id="CP000304">
    <property type="protein sequence ID" value="ABP78505.1"/>
    <property type="molecule type" value="Genomic_DNA"/>
</dbReference>
<dbReference type="RefSeq" id="WP_011911999.1">
    <property type="nucleotide sequence ID" value="NC_009434.1"/>
</dbReference>
<dbReference type="SMR" id="A4VHQ4"/>
<dbReference type="GeneID" id="75213409"/>
<dbReference type="KEGG" id="psa:PST_0808"/>
<dbReference type="eggNOG" id="COG0522">
    <property type="taxonomic scope" value="Bacteria"/>
</dbReference>
<dbReference type="HOGENOM" id="CLU_092403_0_2_6"/>
<dbReference type="Proteomes" id="UP000000233">
    <property type="component" value="Chromosome"/>
</dbReference>
<dbReference type="GO" id="GO:0015935">
    <property type="term" value="C:small ribosomal subunit"/>
    <property type="evidence" value="ECO:0007669"/>
    <property type="project" value="InterPro"/>
</dbReference>
<dbReference type="GO" id="GO:0019843">
    <property type="term" value="F:rRNA binding"/>
    <property type="evidence" value="ECO:0007669"/>
    <property type="project" value="UniProtKB-UniRule"/>
</dbReference>
<dbReference type="GO" id="GO:0003735">
    <property type="term" value="F:structural constituent of ribosome"/>
    <property type="evidence" value="ECO:0007669"/>
    <property type="project" value="InterPro"/>
</dbReference>
<dbReference type="GO" id="GO:0042274">
    <property type="term" value="P:ribosomal small subunit biogenesis"/>
    <property type="evidence" value="ECO:0007669"/>
    <property type="project" value="TreeGrafter"/>
</dbReference>
<dbReference type="GO" id="GO:0006412">
    <property type="term" value="P:translation"/>
    <property type="evidence" value="ECO:0007669"/>
    <property type="project" value="UniProtKB-UniRule"/>
</dbReference>
<dbReference type="CDD" id="cd00165">
    <property type="entry name" value="S4"/>
    <property type="match status" value="1"/>
</dbReference>
<dbReference type="FunFam" id="1.10.1050.10:FF:000001">
    <property type="entry name" value="30S ribosomal protein S4"/>
    <property type="match status" value="1"/>
</dbReference>
<dbReference type="FunFam" id="3.10.290.10:FF:000001">
    <property type="entry name" value="30S ribosomal protein S4"/>
    <property type="match status" value="1"/>
</dbReference>
<dbReference type="Gene3D" id="1.10.1050.10">
    <property type="entry name" value="Ribosomal Protein S4 Delta 41, Chain A, domain 1"/>
    <property type="match status" value="1"/>
</dbReference>
<dbReference type="Gene3D" id="3.10.290.10">
    <property type="entry name" value="RNA-binding S4 domain"/>
    <property type="match status" value="1"/>
</dbReference>
<dbReference type="HAMAP" id="MF_01306_B">
    <property type="entry name" value="Ribosomal_uS4_B"/>
    <property type="match status" value="1"/>
</dbReference>
<dbReference type="InterPro" id="IPR022801">
    <property type="entry name" value="Ribosomal_uS4"/>
</dbReference>
<dbReference type="InterPro" id="IPR005709">
    <property type="entry name" value="Ribosomal_uS4_bac-type"/>
</dbReference>
<dbReference type="InterPro" id="IPR018079">
    <property type="entry name" value="Ribosomal_uS4_CS"/>
</dbReference>
<dbReference type="InterPro" id="IPR001912">
    <property type="entry name" value="Ribosomal_uS4_N"/>
</dbReference>
<dbReference type="InterPro" id="IPR002942">
    <property type="entry name" value="S4_RNA-bd"/>
</dbReference>
<dbReference type="InterPro" id="IPR036986">
    <property type="entry name" value="S4_RNA-bd_sf"/>
</dbReference>
<dbReference type="NCBIfam" id="NF003717">
    <property type="entry name" value="PRK05327.1"/>
    <property type="match status" value="1"/>
</dbReference>
<dbReference type="NCBIfam" id="TIGR01017">
    <property type="entry name" value="rpsD_bact"/>
    <property type="match status" value="1"/>
</dbReference>
<dbReference type="PANTHER" id="PTHR11831">
    <property type="entry name" value="30S 40S RIBOSOMAL PROTEIN"/>
    <property type="match status" value="1"/>
</dbReference>
<dbReference type="PANTHER" id="PTHR11831:SF4">
    <property type="entry name" value="SMALL RIBOSOMAL SUBUNIT PROTEIN US4M"/>
    <property type="match status" value="1"/>
</dbReference>
<dbReference type="Pfam" id="PF00163">
    <property type="entry name" value="Ribosomal_S4"/>
    <property type="match status" value="1"/>
</dbReference>
<dbReference type="Pfam" id="PF01479">
    <property type="entry name" value="S4"/>
    <property type="match status" value="1"/>
</dbReference>
<dbReference type="SMART" id="SM01390">
    <property type="entry name" value="Ribosomal_S4"/>
    <property type="match status" value="1"/>
</dbReference>
<dbReference type="SMART" id="SM00363">
    <property type="entry name" value="S4"/>
    <property type="match status" value="1"/>
</dbReference>
<dbReference type="SUPFAM" id="SSF55174">
    <property type="entry name" value="Alpha-L RNA-binding motif"/>
    <property type="match status" value="1"/>
</dbReference>
<dbReference type="PROSITE" id="PS00632">
    <property type="entry name" value="RIBOSOMAL_S4"/>
    <property type="match status" value="1"/>
</dbReference>
<dbReference type="PROSITE" id="PS50889">
    <property type="entry name" value="S4"/>
    <property type="match status" value="1"/>
</dbReference>
<evidence type="ECO:0000255" key="1">
    <source>
        <dbReference type="HAMAP-Rule" id="MF_01306"/>
    </source>
</evidence>
<evidence type="ECO:0000305" key="2"/>
<proteinExistence type="inferred from homology"/>